<keyword id="KW-0002">3D-structure</keyword>
<keyword id="KW-0007">Acetylation</keyword>
<keyword id="KW-0067">ATP-binding</keyword>
<keyword id="KW-0963">Cytoplasm</keyword>
<keyword id="KW-0903">Direct protein sequencing</keyword>
<keyword id="KW-1015">Disulfide bond</keyword>
<keyword id="KW-0227">DNA damage</keyword>
<keyword id="KW-0234">DNA repair</keyword>
<keyword id="KW-1017">Isopeptide bond</keyword>
<keyword id="KW-0547">Nucleotide-binding</keyword>
<keyword id="KW-0539">Nucleus</keyword>
<keyword id="KW-1267">Proteomics identification</keyword>
<keyword id="KW-1185">Reference proteome</keyword>
<keyword id="KW-0808">Transferase</keyword>
<keyword id="KW-0832">Ubl conjugation</keyword>
<keyword id="KW-0833">Ubl conjugation pathway</keyword>
<comment type="function">
    <text evidence="4 6 18 20 21 23 28 30">The UBE2V1-UBE2N and UBE2V2-UBE2N heterodimers catalyze the synthesis of non-canonical 'Lys-63'-linked polyubiquitin chains. This type of polyubiquitination does not lead to protein degradation by the proteasome. Mediates transcriptional activation of target genes. Plays a role in the control of progress through the cell cycle and differentiation. Plays a role in the error-free DNA repair pathway and contributes to the survival of cells after DNA damage. Acts together with the E3 ligases, HLTF and SHPRH, in the 'Lys-63'-linked poly-ubiquitination of PCNA upon genotoxic stress, which is required for DNA repair. Appears to act together with E3 ligase RNF5 in the 'Lys-63'-linked polyubiquitination of JKAMP thereby regulating JKAMP function by decreasing its association with components of the proteasome and ERAD. Promotes TRIM5 capsid-specific restriction activity and the UBE2V1-UBE2N heterodimer acts in concert with TRIM5 to generate 'Lys-63'-linked polyubiquitin chains which activate the MAP3K7/TAK1 complex which in turn results in the induction and expression of NF-kappa-B and MAPK-responsive inflammatory genes. Together with RNF135 and UB2V1, catalyzes the viral RNA-dependent 'Lys-63'-linked polyubiquitination of RIGI to activate the downstream signaling pathway that leads to interferon beta production (PubMed:28469175, PubMed:31006531). UBE2V1-UBE2N together with TRAF3IP2 E3 ubiquitin ligase mediate 'Lys-63'-linked polyubiquitination of TRAF6, a component of IL17A-mediated signaling pathway.</text>
</comment>
<comment type="catalytic activity">
    <reaction evidence="2 3 21">
        <text>S-ubiquitinyl-[E1 ubiquitin-activating enzyme]-L-cysteine + [E2 ubiquitin-conjugating enzyme]-L-cysteine = [E1 ubiquitin-activating enzyme]-L-cysteine + S-ubiquitinyl-[E2 ubiquitin-conjugating enzyme]-L-cysteine.</text>
        <dbReference type="EC" id="2.3.2.23"/>
    </reaction>
</comment>
<comment type="activity regulation">
    <text evidence="1 22 24 25">Activity is inhibited by binding to OTUB1, which prevents 'Lys-63'-linked polyubiquitination (PubMed:20725033, PubMed:22325355, PubMed:22367539). Activity is inhibited by GPS2, leading to prevent 'Lys-63'-linked polyubiquitination (By similarity).</text>
</comment>
<comment type="pathway">
    <text evidence="2">Protein modification; protein ubiquitination.</text>
</comment>
<comment type="subunit">
    <text evidence="1 4 5 6 9 10 11 12 14 15 16 17 19 22 24 25 26 28 29">Heterodimer with UBE2V2 (PubMed:10089880, PubMed:11473255, PubMed:14562038, PubMed:16307917). Interacts (UBE2V2-UBE2N heterodimer) with the E3 ligase STUB1 (via the U-box domain); the complex has a specific 'Lys-63'-linked polyubiquitination activity (PubMed:16307917). Interacts with RNF8 and RNF168 (PubMed:16215985, PubMed:19203578). Interacts with RNF11 (PubMed:18615712). Interacts with the E3 ligases, HLTF and SHPRH; the interactions promote the 'Lys-63'-linked polyubiquitination of PCNA upon genotoxic stress and lead to DNA repair (PubMed:17108083, PubMed:17130289, PubMed:18316726, PubMed:18719106). Interacts with ARIH2 (via RING-type 2) (PubMed:19340006). Interacts with OTUB1; leading to inhibit E2-conjugating activity (PubMed:20725033, PubMed:22325355, PubMed:22367539). Interacts with GPS2; leading to inhibit E2-conjugating activity (By similarity). Interacts with RIGI and RNF135; involved in RIGI ubiquitination and activation (PubMed:28469175). Interacts with ZNRF1 (PubMed:29626159).</text>
</comment>
<comment type="interaction">
    <interactant intactId="EBI-1052908">
        <id>P61088</id>
    </interactant>
    <interactant intactId="EBI-517709">
        <id>Q13489</id>
        <label>BIRC3</label>
    </interactant>
    <organismsDiffer>false</organismsDiffer>
    <experiments>2</experiments>
</comment>
<comment type="interaction">
    <interactant intactId="EBI-1052908">
        <id>P61088</id>
    </interactant>
    <interactant intactId="EBI-1045161">
        <id>Q14527</id>
        <label>HLTF</label>
    </interactant>
    <organismsDiffer>false</organismsDiffer>
    <experiments>4</experiments>
</comment>
<comment type="interaction">
    <interactant intactId="EBI-1052908">
        <id>P61088</id>
    </interactant>
    <interactant intactId="EBI-720984">
        <id>Q6UWE0</id>
        <label>LRSAM1</label>
    </interactant>
    <organismsDiffer>false</organismsDiffer>
    <experiments>3</experiments>
</comment>
<comment type="interaction">
    <interactant intactId="EBI-1052908">
        <id>P61088</id>
    </interactant>
    <interactant intactId="EBI-15972141">
        <id>Q96FW1-1</id>
        <label>OTUB1</label>
    </interactant>
    <organismsDiffer>false</organismsDiffer>
    <experiments>5</experiments>
</comment>
<comment type="interaction">
    <interactant intactId="EBI-1052908">
        <id>P61088</id>
    </interactant>
    <interactant intactId="EBI-2340624">
        <id>Q9BYM8</id>
        <label>RBCK1</label>
    </interactant>
    <organismsDiffer>false</organismsDiffer>
    <experiments>2</experiments>
</comment>
<comment type="interaction">
    <interactant intactId="EBI-1052908">
        <id>P61088</id>
    </interactant>
    <interactant intactId="EBI-2129159">
        <id>Q6PCD5</id>
        <label>RFWD3</label>
    </interactant>
    <organismsDiffer>false</organismsDiffer>
    <experiments>2</experiments>
</comment>
<comment type="interaction">
    <interactant intactId="EBI-1052908">
        <id>P61088</id>
    </interactant>
    <interactant intactId="EBI-396669">
        <id>Q9Y3C5</id>
        <label>RNF11</label>
    </interactant>
    <organismsDiffer>false</organismsDiffer>
    <experiments>4</experiments>
</comment>
<comment type="interaction">
    <interactant intactId="EBI-1052908">
        <id>P61088</id>
    </interactant>
    <interactant intactId="EBI-2129183">
        <id>O43567</id>
        <label>RNF13</label>
    </interactant>
    <organismsDiffer>false</organismsDiffer>
    <experiments>2</experiments>
</comment>
<comment type="interaction">
    <interactant intactId="EBI-1052908">
        <id>P61088</id>
    </interactant>
    <interactant intactId="EBI-914207">
        <id>Q8IYW5</id>
        <label>RNF168</label>
    </interactant>
    <organismsDiffer>false</organismsDiffer>
    <experiments>2</experiments>
</comment>
<comment type="interaction">
    <interactant intactId="EBI-1052908">
        <id>P61088</id>
    </interactant>
    <interactant intactId="EBI-2130099">
        <id>Q8N6D2</id>
        <label>RNF182</label>
    </interactant>
    <organismsDiffer>false</organismsDiffer>
    <experiments>2</experiments>
</comment>
<comment type="interaction">
    <interactant intactId="EBI-1052908">
        <id>P61088</id>
    </interactant>
    <interactant intactId="EBI-15612386">
        <id>Q149N8-1</id>
        <label>SHPRH</label>
    </interactant>
    <organismsDiffer>false</organismsDiffer>
    <experiments>2</experiments>
</comment>
<comment type="interaction">
    <interactant intactId="EBI-1052908">
        <id>P61088</id>
    </interactant>
    <interactant intactId="EBI-357085">
        <id>Q9UNE7</id>
        <label>STUB1</label>
    </interactant>
    <organismsDiffer>false</organismsDiffer>
    <experiments>5</experiments>
</comment>
<comment type="interaction">
    <interactant intactId="EBI-1052908">
        <id>P61088</id>
    </interactant>
    <interactant intactId="EBI-359276">
        <id>Q9Y4K3</id>
        <label>TRAF6</label>
    </interactant>
    <organismsDiffer>false</organismsDiffer>
    <experiments>8</experiments>
</comment>
<comment type="interaction">
    <interactant intactId="EBI-1052908">
        <id>P61088</id>
    </interactant>
    <interactant intactId="EBI-742790">
        <id>Q13049</id>
        <label>TRIM32</label>
    </interactant>
    <organismsDiffer>false</organismsDiffer>
    <experiments>3</experiments>
</comment>
<comment type="interaction">
    <interactant intactId="EBI-1052908">
        <id>P61088</id>
    </interactant>
    <interactant intactId="EBI-1050671">
        <id>Q13404</id>
        <label>UBE2V1</label>
    </interactant>
    <organismsDiffer>false</organismsDiffer>
    <experiments>20</experiments>
</comment>
<comment type="interaction">
    <interactant intactId="EBI-1052908">
        <id>P61088</id>
    </interactant>
    <interactant intactId="EBI-15972179">
        <id>Q13404-2</id>
        <label>UBE2V1</label>
    </interactant>
    <organismsDiffer>false</organismsDiffer>
    <experiments>2</experiments>
</comment>
<comment type="interaction">
    <interactant intactId="EBI-1052908">
        <id>P61088</id>
    </interactant>
    <interactant intactId="EBI-714329">
        <id>Q15819</id>
        <label>UBE2V2</label>
    </interactant>
    <organismsDiffer>false</organismsDiffer>
    <experiments>5</experiments>
</comment>
<comment type="interaction">
    <interactant intactId="EBI-1052908">
        <id>P61088</id>
    </interactant>
    <interactant intactId="EBI-517127">
        <id>P98170</id>
        <label>XIAP</label>
    </interactant>
    <organismsDiffer>false</organismsDiffer>
    <experiments>2</experiments>
</comment>
<comment type="interaction">
    <interactant intactId="EBI-1052908">
        <id>P61088</id>
    </interactant>
    <interactant intactId="EBI-2129250">
        <id>Q8ND25</id>
        <label>ZNRF1</label>
    </interactant>
    <organismsDiffer>false</organismsDiffer>
    <experiments>6</experiments>
</comment>
<comment type="interaction">
    <interactant intactId="EBI-1052908">
        <id>P61088</id>
    </interactant>
    <interactant intactId="EBI-636664">
        <id>Q62925</id>
        <label>Map3k1</label>
    </interactant>
    <organismsDiffer>true</organismsDiffer>
    <experiments>46</experiments>
</comment>
<comment type="interaction">
    <interactant intactId="EBI-1052908">
        <id>P61088</id>
    </interactant>
    <interactant intactId="EBI-15974371">
        <id>Q8VSD5</id>
        <label>ORF169b</label>
    </interactant>
    <organismsDiffer>true</organismsDiffer>
    <experiments>2</experiments>
</comment>
<comment type="interaction">
    <interactant intactId="EBI-1052908">
        <id>P61088</id>
    </interactant>
    <interactant intactId="EBI-316044">
        <id>Q9XVR6</id>
        <label>otub-1</label>
    </interactant>
    <organismsDiffer>true</organismsDiffer>
    <experiments>2</experiments>
</comment>
<comment type="interaction">
    <interactant intactId="EBI-1052908">
        <id>P61088</id>
    </interactant>
    <interactant intactId="EBI-773027">
        <id>Q9WUD1</id>
        <label>Stub1</label>
    </interactant>
    <organismsDiffer>true</organismsDiffer>
    <experiments>2</experiments>
</comment>
<comment type="subcellular location">
    <subcellularLocation>
        <location evidence="19">Nucleus</location>
    </subcellularLocation>
    <subcellularLocation>
        <location evidence="19">Cytoplasm</location>
    </subcellularLocation>
</comment>
<comment type="PTM">
    <text evidence="7">Conjugation to ISG15 impairs formation of the thioester bond with ubiquitin but not interaction with UBE2V2.</text>
</comment>
<comment type="similarity">
    <text evidence="2">Belongs to the ubiquitin-conjugating enzyme family.</text>
</comment>
<sequence>MAGLPRRIIKETQRLLAEPVPGIKAEPDESNARYFHVVIAGPQDSPFEGGTFKLELFLPEEYPMAAPKVRFMTKIYHPNVDKLGRICLDILKDKWSPALQIRTVLLSIQALLSAPNPDDPLANDVAEQWKTNEAQAIETARAWTRLYAMNNI</sequence>
<dbReference type="EC" id="2.3.2.23" evidence="21"/>
<dbReference type="EMBL" id="D83004">
    <property type="protein sequence ID" value="BAA11675.1"/>
    <property type="molecule type" value="mRNA"/>
</dbReference>
<dbReference type="EMBL" id="BT006873">
    <property type="protein sequence ID" value="AAP35519.1"/>
    <property type="molecule type" value="mRNA"/>
</dbReference>
<dbReference type="EMBL" id="BC000396">
    <property type="protein sequence ID" value="AAH00396.1"/>
    <property type="molecule type" value="mRNA"/>
</dbReference>
<dbReference type="EMBL" id="BC003365">
    <property type="protein sequence ID" value="AAH03365.1"/>
    <property type="molecule type" value="mRNA"/>
</dbReference>
<dbReference type="EMBL" id="BC108704">
    <property type="protein sequence ID" value="AAI08705.1"/>
    <property type="molecule type" value="mRNA"/>
</dbReference>
<dbReference type="CCDS" id="CCDS31875.1"/>
<dbReference type="PIR" id="JC4894">
    <property type="entry name" value="JC4894"/>
</dbReference>
<dbReference type="RefSeq" id="NP_003339.1">
    <property type="nucleotide sequence ID" value="NM_003348.4"/>
</dbReference>
<dbReference type="PDB" id="1J7D">
    <property type="method" value="X-ray"/>
    <property type="resolution" value="1.85 A"/>
    <property type="chains" value="B=1-152"/>
</dbReference>
<dbReference type="PDB" id="2C2V">
    <property type="method" value="X-ray"/>
    <property type="resolution" value="2.90 A"/>
    <property type="chains" value="B/E/H/K=2-152"/>
</dbReference>
<dbReference type="PDB" id="3HCT">
    <property type="method" value="X-ray"/>
    <property type="resolution" value="2.10 A"/>
    <property type="chains" value="B=1-152"/>
</dbReference>
<dbReference type="PDB" id="3HCU">
    <property type="method" value="X-ray"/>
    <property type="resolution" value="2.60 A"/>
    <property type="chains" value="B/D=1-152"/>
</dbReference>
<dbReference type="PDB" id="3VON">
    <property type="method" value="X-ray"/>
    <property type="resolution" value="3.15 A"/>
    <property type="chains" value="C/E/G/J/L/N/Q/S/U/X/Z/b/e/g/i/l/n/p=3-150"/>
</dbReference>
<dbReference type="PDB" id="3W31">
    <property type="method" value="X-ray"/>
    <property type="resolution" value="2.96 A"/>
    <property type="chains" value="B=1-152"/>
</dbReference>
<dbReference type="PDB" id="4DHI">
    <property type="method" value="X-ray"/>
    <property type="resolution" value="1.80 A"/>
    <property type="chains" value="D=1-152"/>
</dbReference>
<dbReference type="PDB" id="4DHJ">
    <property type="method" value="X-ray"/>
    <property type="resolution" value="2.35 A"/>
    <property type="chains" value="C/G/K/N=1-152"/>
</dbReference>
<dbReference type="PDB" id="4DHZ">
    <property type="method" value="X-ray"/>
    <property type="resolution" value="3.11 A"/>
    <property type="chains" value="F=1-152"/>
</dbReference>
<dbReference type="PDB" id="4IP3">
    <property type="method" value="X-ray"/>
    <property type="resolution" value="2.30 A"/>
    <property type="chains" value="B=1-152"/>
</dbReference>
<dbReference type="PDB" id="4NR3">
    <property type="method" value="X-ray"/>
    <property type="resolution" value="1.80 A"/>
    <property type="chains" value="B=2-150"/>
</dbReference>
<dbReference type="PDB" id="4NRG">
    <property type="method" value="X-ray"/>
    <property type="resolution" value="1.95 A"/>
    <property type="chains" value="B=1-152"/>
</dbReference>
<dbReference type="PDB" id="4NRI">
    <property type="method" value="X-ray"/>
    <property type="resolution" value="2.30 A"/>
    <property type="chains" value="B=3-150"/>
</dbReference>
<dbReference type="PDB" id="4ONL">
    <property type="method" value="X-ray"/>
    <property type="resolution" value="1.35 A"/>
    <property type="chains" value="B=1-152"/>
</dbReference>
<dbReference type="PDB" id="4ONM">
    <property type="method" value="X-ray"/>
    <property type="resolution" value="1.35 A"/>
    <property type="chains" value="B=1-152"/>
</dbReference>
<dbReference type="PDB" id="4ONN">
    <property type="method" value="X-ray"/>
    <property type="resolution" value="1.50 A"/>
    <property type="chains" value="B=1-152"/>
</dbReference>
<dbReference type="PDB" id="4ORH">
    <property type="method" value="X-ray"/>
    <property type="resolution" value="4.80 A"/>
    <property type="chains" value="B/F/J=1-152"/>
</dbReference>
<dbReference type="PDB" id="4TKP">
    <property type="method" value="X-ray"/>
    <property type="resolution" value="2.08 A"/>
    <property type="chains" value="A=2-152"/>
</dbReference>
<dbReference type="PDB" id="4WHV">
    <property type="method" value="X-ray"/>
    <property type="resolution" value="8.30 A"/>
    <property type="chains" value="B/E/H/K=1-152"/>
</dbReference>
<dbReference type="PDB" id="5AIT">
    <property type="method" value="X-ray"/>
    <property type="resolution" value="3.40 A"/>
    <property type="chains" value="B/E=1-152"/>
</dbReference>
<dbReference type="PDB" id="5AIU">
    <property type="method" value="X-ray"/>
    <property type="resolution" value="2.21 A"/>
    <property type="chains" value="B/E=1-152"/>
</dbReference>
<dbReference type="PDB" id="5EYA">
    <property type="method" value="X-ray"/>
    <property type="resolution" value="2.40 A"/>
    <property type="chains" value="A/B=1-152"/>
</dbReference>
<dbReference type="PDB" id="5H7S">
    <property type="method" value="X-ray"/>
    <property type="resolution" value="3.49 A"/>
    <property type="chains" value="A/C=1-152"/>
</dbReference>
<dbReference type="PDB" id="5VNZ">
    <property type="method" value="X-ray"/>
    <property type="resolution" value="3.41 A"/>
    <property type="chains" value="B/E=1-152"/>
</dbReference>
<dbReference type="PDB" id="5VO0">
    <property type="method" value="X-ray"/>
    <property type="resolution" value="3.90 A"/>
    <property type="chains" value="B/E=1-152"/>
</dbReference>
<dbReference type="PDB" id="5YWR">
    <property type="method" value="X-ray"/>
    <property type="resolution" value="1.47 A"/>
    <property type="chains" value="A=1-152"/>
</dbReference>
<dbReference type="PDB" id="6D6I">
    <property type="method" value="X-ray"/>
    <property type="resolution" value="2.55 A"/>
    <property type="chains" value="B/E=3-152"/>
</dbReference>
<dbReference type="PDB" id="6JKY">
    <property type="method" value="X-ray"/>
    <property type="resolution" value="2.45 A"/>
    <property type="chains" value="B/E=1-152"/>
</dbReference>
<dbReference type="PDB" id="6KFP">
    <property type="method" value="X-ray"/>
    <property type="resolution" value="2.92 A"/>
    <property type="chains" value="B=1-152"/>
</dbReference>
<dbReference type="PDB" id="6KG6">
    <property type="method" value="X-ray"/>
    <property type="resolution" value="2.39 A"/>
    <property type="chains" value="G=1-152"/>
</dbReference>
<dbReference type="PDB" id="6KL4">
    <property type="method" value="X-ray"/>
    <property type="resolution" value="2.85 A"/>
    <property type="chains" value="B=1-152"/>
</dbReference>
<dbReference type="PDB" id="6LP2">
    <property type="method" value="X-ray"/>
    <property type="resolution" value="2.48 A"/>
    <property type="chains" value="D=1-152"/>
</dbReference>
<dbReference type="PDB" id="6P5B">
    <property type="method" value="X-ray"/>
    <property type="resolution" value="2.10 A"/>
    <property type="chains" value="C=1-152"/>
</dbReference>
<dbReference type="PDB" id="6S53">
    <property type="method" value="X-ray"/>
    <property type="resolution" value="2.80 A"/>
    <property type="chains" value="C/E/I/K=1-152"/>
</dbReference>
<dbReference type="PDB" id="6ULH">
    <property type="method" value="X-ray"/>
    <property type="resolution" value="1.97 A"/>
    <property type="chains" value="C=1-152"/>
</dbReference>
<dbReference type="PDB" id="6UMP">
    <property type="method" value="X-ray"/>
    <property type="resolution" value="2.80 A"/>
    <property type="chains" value="C=1-152"/>
</dbReference>
<dbReference type="PDB" id="6UMS">
    <property type="method" value="X-ray"/>
    <property type="resolution" value="2.34 A"/>
    <property type="chains" value="C=1-152"/>
</dbReference>
<dbReference type="PDB" id="7BBD">
    <property type="method" value="X-ray"/>
    <property type="resolution" value="2.20 A"/>
    <property type="chains" value="C=1-152"/>
</dbReference>
<dbReference type="PDB" id="7BBF">
    <property type="method" value="X-ray"/>
    <property type="resolution" value="2.54 A"/>
    <property type="chains" value="A/D/G=1-152"/>
</dbReference>
<dbReference type="PDB" id="7BXG">
    <property type="method" value="X-ray"/>
    <property type="resolution" value="2.71 A"/>
    <property type="chains" value="B=1-152"/>
</dbReference>
<dbReference type="PDB" id="9BIV">
    <property type="method" value="X-ray"/>
    <property type="resolution" value="1.68 A"/>
    <property type="chains" value="B=1-152"/>
</dbReference>
<dbReference type="PDBsum" id="1J7D"/>
<dbReference type="PDBsum" id="2C2V"/>
<dbReference type="PDBsum" id="3HCT"/>
<dbReference type="PDBsum" id="3HCU"/>
<dbReference type="PDBsum" id="3VON"/>
<dbReference type="PDBsum" id="3W31"/>
<dbReference type="PDBsum" id="4DHI"/>
<dbReference type="PDBsum" id="4DHJ"/>
<dbReference type="PDBsum" id="4DHZ"/>
<dbReference type="PDBsum" id="4IP3"/>
<dbReference type="PDBsum" id="4NR3"/>
<dbReference type="PDBsum" id="4NRG"/>
<dbReference type="PDBsum" id="4NRI"/>
<dbReference type="PDBsum" id="4ONL"/>
<dbReference type="PDBsum" id="4ONM"/>
<dbReference type="PDBsum" id="4ONN"/>
<dbReference type="PDBsum" id="4ORH"/>
<dbReference type="PDBsum" id="4TKP"/>
<dbReference type="PDBsum" id="4WHV"/>
<dbReference type="PDBsum" id="5AIT"/>
<dbReference type="PDBsum" id="5AIU"/>
<dbReference type="PDBsum" id="5EYA"/>
<dbReference type="PDBsum" id="5H7S"/>
<dbReference type="PDBsum" id="5VNZ"/>
<dbReference type="PDBsum" id="5VO0"/>
<dbReference type="PDBsum" id="5YWR"/>
<dbReference type="PDBsum" id="6D6I"/>
<dbReference type="PDBsum" id="6JKY"/>
<dbReference type="PDBsum" id="6KFP"/>
<dbReference type="PDBsum" id="6KG6"/>
<dbReference type="PDBsum" id="6KL4"/>
<dbReference type="PDBsum" id="6LP2"/>
<dbReference type="PDBsum" id="6P5B"/>
<dbReference type="PDBsum" id="6S53"/>
<dbReference type="PDBsum" id="6ULH"/>
<dbReference type="PDBsum" id="6UMP"/>
<dbReference type="PDBsum" id="6UMS"/>
<dbReference type="PDBsum" id="7BBD"/>
<dbReference type="PDBsum" id="7BBF"/>
<dbReference type="PDBsum" id="7BXG"/>
<dbReference type="PDBsum" id="9BIV"/>
<dbReference type="BMRB" id="P61088"/>
<dbReference type="SASBDB" id="P61088"/>
<dbReference type="SMR" id="P61088"/>
<dbReference type="BioGRID" id="113182">
    <property type="interactions" value="346"/>
</dbReference>
<dbReference type="ComplexPortal" id="CPX-485">
    <property type="entry name" value="UBC13-UEV1A ubiquitin-conjugating enzyme E2 complex"/>
</dbReference>
<dbReference type="ComplexPortal" id="CPX-530">
    <property type="entry name" value="UBC13-MMS2 ubiquitin-conjugating enzyme E2 complex"/>
</dbReference>
<dbReference type="CORUM" id="P61088"/>
<dbReference type="DIP" id="DIP-29829N"/>
<dbReference type="FunCoup" id="P61088">
    <property type="interactions" value="2974"/>
</dbReference>
<dbReference type="IntAct" id="P61088">
    <property type="interactions" value="170"/>
</dbReference>
<dbReference type="MINT" id="P61088"/>
<dbReference type="STRING" id="9606.ENSP00000316176"/>
<dbReference type="BindingDB" id="P61088"/>
<dbReference type="ChEMBL" id="CHEMBL6089"/>
<dbReference type="MoonDB" id="P61088">
    <property type="type" value="Predicted"/>
</dbReference>
<dbReference type="GlyGen" id="P61088">
    <property type="glycosylation" value="1 site, 1 O-linked glycan (1 site)"/>
</dbReference>
<dbReference type="iPTMnet" id="P61088"/>
<dbReference type="MetOSite" id="P61088"/>
<dbReference type="PhosphoSitePlus" id="P61088"/>
<dbReference type="SwissPalm" id="P61088"/>
<dbReference type="BioMuta" id="UBE2N"/>
<dbReference type="DMDM" id="46577660"/>
<dbReference type="OGP" id="Q16781"/>
<dbReference type="REPRODUCTION-2DPAGE" id="IPI00003949"/>
<dbReference type="jPOST" id="P61088"/>
<dbReference type="MassIVE" id="P61088"/>
<dbReference type="PaxDb" id="9606-ENSP00000316176"/>
<dbReference type="PeptideAtlas" id="P61088"/>
<dbReference type="PRIDE" id="P61088"/>
<dbReference type="ProteomicsDB" id="57264"/>
<dbReference type="Pumba" id="P61088"/>
<dbReference type="TopDownProteomics" id="P61088"/>
<dbReference type="Antibodypedia" id="1151">
    <property type="antibodies" value="375 antibodies from 39 providers"/>
</dbReference>
<dbReference type="DNASU" id="7334"/>
<dbReference type="Ensembl" id="ENST00000318066.7">
    <property type="protein sequence ID" value="ENSP00000316176.2"/>
    <property type="gene ID" value="ENSG00000177889.10"/>
</dbReference>
<dbReference type="GeneID" id="7334"/>
<dbReference type="KEGG" id="hsa:7334"/>
<dbReference type="MANE-Select" id="ENST00000318066.7">
    <property type="protein sequence ID" value="ENSP00000316176.2"/>
    <property type="RefSeq nucleotide sequence ID" value="NM_003348.4"/>
    <property type="RefSeq protein sequence ID" value="NP_003339.1"/>
</dbReference>
<dbReference type="AGR" id="HGNC:12492"/>
<dbReference type="CTD" id="7334"/>
<dbReference type="DisGeNET" id="7334"/>
<dbReference type="GeneCards" id="UBE2N"/>
<dbReference type="HGNC" id="HGNC:12492">
    <property type="gene designation" value="UBE2N"/>
</dbReference>
<dbReference type="HPA" id="ENSG00000177889">
    <property type="expression patterns" value="Low tissue specificity"/>
</dbReference>
<dbReference type="MIM" id="603679">
    <property type="type" value="gene"/>
</dbReference>
<dbReference type="neXtProt" id="NX_P61088"/>
<dbReference type="OpenTargets" id="ENSG00000177889"/>
<dbReference type="PharmGKB" id="PA37141"/>
<dbReference type="VEuPathDB" id="HostDB:ENSG00000177889"/>
<dbReference type="eggNOG" id="KOG0417">
    <property type="taxonomic scope" value="Eukaryota"/>
</dbReference>
<dbReference type="GeneTree" id="ENSGT00540000070023"/>
<dbReference type="HOGENOM" id="CLU_030988_13_2_1"/>
<dbReference type="InParanoid" id="P61088"/>
<dbReference type="OMA" id="AEPHEDN"/>
<dbReference type="OrthoDB" id="7851174at2759"/>
<dbReference type="PAN-GO" id="P61088">
    <property type="GO annotations" value="4 GO annotations based on evolutionary models"/>
</dbReference>
<dbReference type="PhylomeDB" id="P61088"/>
<dbReference type="TreeFam" id="TF101126"/>
<dbReference type="BRENDA" id="2.3.2.23">
    <property type="organism ID" value="2681"/>
</dbReference>
<dbReference type="BRENDA" id="2.3.2.24">
    <property type="organism ID" value="2681"/>
</dbReference>
<dbReference type="PathwayCommons" id="P61088"/>
<dbReference type="Reactome" id="R-HSA-1169408">
    <property type="pathway name" value="ISG15 antiviral mechanism"/>
</dbReference>
<dbReference type="Reactome" id="R-HSA-168638">
    <property type="pathway name" value="NOD1/2 Signaling Pathway"/>
</dbReference>
<dbReference type="Reactome" id="R-HSA-168927">
    <property type="pathway name" value="TICAM1, RIP1-mediated IKK complex recruitment"/>
</dbReference>
<dbReference type="Reactome" id="R-HSA-202424">
    <property type="pathway name" value="Downstream TCR signaling"/>
</dbReference>
<dbReference type="Reactome" id="R-HSA-2871837">
    <property type="pathway name" value="FCERI mediated NF-kB activation"/>
</dbReference>
<dbReference type="Reactome" id="R-HSA-445989">
    <property type="pathway name" value="TAK1-dependent IKK and NF-kappa-B activation"/>
</dbReference>
<dbReference type="Reactome" id="R-HSA-450302">
    <property type="pathway name" value="activated TAK1 mediates p38 MAPK activation"/>
</dbReference>
<dbReference type="Reactome" id="R-HSA-450321">
    <property type="pathway name" value="JNK (c-Jun kinases) phosphorylation and activation mediated by activated human TAK1"/>
</dbReference>
<dbReference type="Reactome" id="R-HSA-5205685">
    <property type="pathway name" value="PINK1-PRKN Mediated Mitophagy"/>
</dbReference>
<dbReference type="Reactome" id="R-HSA-5607764">
    <property type="pathway name" value="CLEC7A (Dectin-1) signaling"/>
</dbReference>
<dbReference type="Reactome" id="R-HSA-5693565">
    <property type="pathway name" value="Recruitment and ATM-mediated phosphorylation of repair and signaling proteins at DNA double strand breaks"/>
</dbReference>
<dbReference type="Reactome" id="R-HSA-5693571">
    <property type="pathway name" value="Nonhomologous End-Joining (NHEJ)"/>
</dbReference>
<dbReference type="Reactome" id="R-HSA-5693607">
    <property type="pathway name" value="Processing of DNA double-strand break ends"/>
</dbReference>
<dbReference type="Reactome" id="R-HSA-5696395">
    <property type="pathway name" value="Formation of Incision Complex in GG-NER"/>
</dbReference>
<dbReference type="Reactome" id="R-HSA-69473">
    <property type="pathway name" value="G2/M DNA damage checkpoint"/>
</dbReference>
<dbReference type="Reactome" id="R-HSA-8866654">
    <property type="pathway name" value="E3 ubiquitin ligases ubiquitinate target proteins"/>
</dbReference>
<dbReference type="Reactome" id="R-HSA-9020702">
    <property type="pathway name" value="Interleukin-1 signaling"/>
</dbReference>
<dbReference type="Reactome" id="R-HSA-937039">
    <property type="pathway name" value="IRAK1 recruits IKK complex"/>
</dbReference>
<dbReference type="Reactome" id="R-HSA-937041">
    <property type="pathway name" value="IKK complex recruitment mediated by RIP1"/>
</dbReference>
<dbReference type="Reactome" id="R-HSA-9646399">
    <property type="pathway name" value="Aggrephagy"/>
</dbReference>
<dbReference type="Reactome" id="R-HSA-9705671">
    <property type="pathway name" value="SARS-CoV-2 activates/modulates innate and adaptive immune responses"/>
</dbReference>
<dbReference type="Reactome" id="R-HSA-975110">
    <property type="pathway name" value="TRAF6 mediated IRF7 activation in TLR7/8 or 9 signaling"/>
</dbReference>
<dbReference type="Reactome" id="R-HSA-975144">
    <property type="pathway name" value="IRAK1 recruits IKK complex upon TLR7/8 or 9 stimulation"/>
</dbReference>
<dbReference type="Reactome" id="R-HSA-983168">
    <property type="pathway name" value="Antigen processing: Ubiquitination &amp; Proteasome degradation"/>
</dbReference>
<dbReference type="SignaLink" id="P61088"/>
<dbReference type="SIGNOR" id="P61088"/>
<dbReference type="UniPathway" id="UPA00143"/>
<dbReference type="BioGRID-ORCS" id="7334">
    <property type="hits" value="583 hits in 1161 CRISPR screens"/>
</dbReference>
<dbReference type="CD-CODE" id="91857CE7">
    <property type="entry name" value="Nucleolus"/>
</dbReference>
<dbReference type="ChiTaRS" id="UBE2N">
    <property type="organism name" value="human"/>
</dbReference>
<dbReference type="EvolutionaryTrace" id="P61088"/>
<dbReference type="GeneWiki" id="UBE2N"/>
<dbReference type="GenomeRNAi" id="7334"/>
<dbReference type="Pharos" id="P61088">
    <property type="development level" value="Tchem"/>
</dbReference>
<dbReference type="PRO" id="PR:P61088"/>
<dbReference type="Proteomes" id="UP000005640">
    <property type="component" value="Chromosome 12"/>
</dbReference>
<dbReference type="RNAct" id="P61088">
    <property type="molecule type" value="protein"/>
</dbReference>
<dbReference type="Bgee" id="ENSG00000177889">
    <property type="expression patterns" value="Expressed in left testis and 215 other cell types or tissues"/>
</dbReference>
<dbReference type="ExpressionAtlas" id="P61088">
    <property type="expression patterns" value="baseline and differential"/>
</dbReference>
<dbReference type="GO" id="GO:0005737">
    <property type="term" value="C:cytoplasm"/>
    <property type="evidence" value="ECO:0000314"/>
    <property type="project" value="UniProtKB"/>
</dbReference>
<dbReference type="GO" id="GO:0005829">
    <property type="term" value="C:cytosol"/>
    <property type="evidence" value="ECO:0000314"/>
    <property type="project" value="ComplexPortal"/>
</dbReference>
<dbReference type="GO" id="GO:0070062">
    <property type="term" value="C:extracellular exosome"/>
    <property type="evidence" value="ECO:0007005"/>
    <property type="project" value="UniProtKB"/>
</dbReference>
<dbReference type="GO" id="GO:0005654">
    <property type="term" value="C:nucleoplasm"/>
    <property type="evidence" value="ECO:0000304"/>
    <property type="project" value="Reactome"/>
</dbReference>
<dbReference type="GO" id="GO:0005634">
    <property type="term" value="C:nucleus"/>
    <property type="evidence" value="ECO:0000314"/>
    <property type="project" value="UniProtKB"/>
</dbReference>
<dbReference type="GO" id="GO:0032991">
    <property type="term" value="C:protein-containing complex"/>
    <property type="evidence" value="ECO:0000314"/>
    <property type="project" value="MGI"/>
</dbReference>
<dbReference type="GO" id="GO:0031372">
    <property type="term" value="C:UBC13-MMS2 complex"/>
    <property type="evidence" value="ECO:0000314"/>
    <property type="project" value="UniProtKB"/>
</dbReference>
<dbReference type="GO" id="GO:0031371">
    <property type="term" value="C:ubiquitin conjugating enzyme complex"/>
    <property type="evidence" value="ECO:0000314"/>
    <property type="project" value="HGNC-UCL"/>
</dbReference>
<dbReference type="GO" id="GO:0000151">
    <property type="term" value="C:ubiquitin ligase complex"/>
    <property type="evidence" value="ECO:0000314"/>
    <property type="project" value="UniProtKB"/>
</dbReference>
<dbReference type="GO" id="GO:0005524">
    <property type="term" value="F:ATP binding"/>
    <property type="evidence" value="ECO:0007669"/>
    <property type="project" value="UniProtKB-KW"/>
</dbReference>
<dbReference type="GO" id="GO:0003723">
    <property type="term" value="F:RNA binding"/>
    <property type="evidence" value="ECO:0007005"/>
    <property type="project" value="UniProtKB"/>
</dbReference>
<dbReference type="GO" id="GO:0043130">
    <property type="term" value="F:ubiquitin binding"/>
    <property type="evidence" value="ECO:0000314"/>
    <property type="project" value="HGNC-UCL"/>
</dbReference>
<dbReference type="GO" id="GO:0061631">
    <property type="term" value="F:ubiquitin conjugating enzyme activity"/>
    <property type="evidence" value="ECO:0000314"/>
    <property type="project" value="UniProt"/>
</dbReference>
<dbReference type="GO" id="GO:0031625">
    <property type="term" value="F:ubiquitin protein ligase binding"/>
    <property type="evidence" value="ECO:0000353"/>
    <property type="project" value="UniProtKB"/>
</dbReference>
<dbReference type="GO" id="GO:0097027">
    <property type="term" value="F:ubiquitin-protein transferase activator activity"/>
    <property type="evidence" value="ECO:0000315"/>
    <property type="project" value="HGNC-UCL"/>
</dbReference>
<dbReference type="GO" id="GO:0004842">
    <property type="term" value="F:ubiquitin-protein transferase activity"/>
    <property type="evidence" value="ECO:0000314"/>
    <property type="project" value="UniProtKB"/>
</dbReference>
<dbReference type="GO" id="GO:0140374">
    <property type="term" value="P:antiviral innate immune response"/>
    <property type="evidence" value="ECO:0000314"/>
    <property type="project" value="UniProt"/>
</dbReference>
<dbReference type="GO" id="GO:0000729">
    <property type="term" value="P:DNA double-strand break processing"/>
    <property type="evidence" value="ECO:0000315"/>
    <property type="project" value="HGNC-UCL"/>
</dbReference>
<dbReference type="GO" id="GO:0000724">
    <property type="term" value="P:double-strand break repair via homologous recombination"/>
    <property type="evidence" value="ECO:0000315"/>
    <property type="project" value="HGNC-UCL"/>
</dbReference>
<dbReference type="GO" id="GO:1904262">
    <property type="term" value="P:negative regulation of TORC1 signaling"/>
    <property type="evidence" value="ECO:0000314"/>
    <property type="project" value="UniProt"/>
</dbReference>
<dbReference type="GO" id="GO:0043123">
    <property type="term" value="P:positive regulation of canonical NF-kappaB signal transduction"/>
    <property type="evidence" value="ECO:0000315"/>
    <property type="project" value="HGNC-UCL"/>
</dbReference>
<dbReference type="GO" id="GO:0045739">
    <property type="term" value="P:positive regulation of DNA repair"/>
    <property type="evidence" value="ECO:0000315"/>
    <property type="project" value="HGNC-UCL"/>
</dbReference>
<dbReference type="GO" id="GO:2000781">
    <property type="term" value="P:positive regulation of double-strand break repair"/>
    <property type="evidence" value="ECO:0000314"/>
    <property type="project" value="ComplexPortal"/>
</dbReference>
<dbReference type="GO" id="GO:1902533">
    <property type="term" value="P:positive regulation of intracellular signal transduction"/>
    <property type="evidence" value="ECO:0000314"/>
    <property type="project" value="ComplexPortal"/>
</dbReference>
<dbReference type="GO" id="GO:0051092">
    <property type="term" value="P:positive regulation of NF-kappaB transcription factor activity"/>
    <property type="evidence" value="ECO:0000315"/>
    <property type="project" value="UniProtKB"/>
</dbReference>
<dbReference type="GO" id="GO:1902523">
    <property type="term" value="P:positive regulation of protein K63-linked ubiquitination"/>
    <property type="evidence" value="ECO:0000314"/>
    <property type="project" value="ComplexPortal"/>
</dbReference>
<dbReference type="GO" id="GO:0006301">
    <property type="term" value="P:postreplication repair"/>
    <property type="evidence" value="ECO:0000315"/>
    <property type="project" value="HGNC-UCL"/>
</dbReference>
<dbReference type="GO" id="GO:0043161">
    <property type="term" value="P:proteasome-mediated ubiquitin-dependent protein catabolic process"/>
    <property type="evidence" value="ECO:0000314"/>
    <property type="project" value="UniProt"/>
</dbReference>
<dbReference type="GO" id="GO:0070534">
    <property type="term" value="P:protein K63-linked ubiquitination"/>
    <property type="evidence" value="ECO:0000314"/>
    <property type="project" value="UniProtKB"/>
</dbReference>
<dbReference type="GO" id="GO:0006513">
    <property type="term" value="P:protein monoubiquitination"/>
    <property type="evidence" value="ECO:0000315"/>
    <property type="project" value="HGNC-UCL"/>
</dbReference>
<dbReference type="GO" id="GO:0000209">
    <property type="term" value="P:protein polyubiquitination"/>
    <property type="evidence" value="ECO:0000315"/>
    <property type="project" value="HGNC-UCL"/>
</dbReference>
<dbReference type="GO" id="GO:0016567">
    <property type="term" value="P:protein ubiquitination"/>
    <property type="evidence" value="ECO:0000304"/>
    <property type="project" value="HGNC-UCL"/>
</dbReference>
<dbReference type="GO" id="GO:0006282">
    <property type="term" value="P:regulation of DNA repair"/>
    <property type="evidence" value="ECO:0000304"/>
    <property type="project" value="ProtInc"/>
</dbReference>
<dbReference type="GO" id="GO:0050852">
    <property type="term" value="P:T cell receptor signaling pathway"/>
    <property type="evidence" value="ECO:0000315"/>
    <property type="project" value="UniProtKB"/>
</dbReference>
<dbReference type="CDD" id="cd23813">
    <property type="entry name" value="UBCc_UBE2N"/>
    <property type="match status" value="1"/>
</dbReference>
<dbReference type="FunFam" id="3.10.110.10:FF:000015">
    <property type="entry name" value="Ubiquitin-conjugating enzyme E2 N"/>
    <property type="match status" value="1"/>
</dbReference>
<dbReference type="Gene3D" id="3.10.110.10">
    <property type="entry name" value="Ubiquitin Conjugating Enzyme"/>
    <property type="match status" value="1"/>
</dbReference>
<dbReference type="InterPro" id="IPR000608">
    <property type="entry name" value="UBQ-conjugat_E2_core"/>
</dbReference>
<dbReference type="InterPro" id="IPR023313">
    <property type="entry name" value="UBQ-conjugating_AS"/>
</dbReference>
<dbReference type="InterPro" id="IPR016135">
    <property type="entry name" value="UBQ-conjugating_enzyme/RWD"/>
</dbReference>
<dbReference type="PANTHER" id="PTHR24068">
    <property type="entry name" value="UBIQUITIN-CONJUGATING ENZYME E2"/>
    <property type="match status" value="1"/>
</dbReference>
<dbReference type="Pfam" id="PF00179">
    <property type="entry name" value="UQ_con"/>
    <property type="match status" value="1"/>
</dbReference>
<dbReference type="SMART" id="SM00212">
    <property type="entry name" value="UBCc"/>
    <property type="match status" value="1"/>
</dbReference>
<dbReference type="SUPFAM" id="SSF54495">
    <property type="entry name" value="UBC-like"/>
    <property type="match status" value="1"/>
</dbReference>
<dbReference type="PROSITE" id="PS00183">
    <property type="entry name" value="UBC_1"/>
    <property type="match status" value="1"/>
</dbReference>
<dbReference type="PROSITE" id="PS50127">
    <property type="entry name" value="UBC_2"/>
    <property type="match status" value="1"/>
</dbReference>
<feature type="chain" id="PRO_0000082502" description="Ubiquitin-conjugating enzyme E2 N">
    <location>
        <begin position="1"/>
        <end position="152"/>
    </location>
</feature>
<feature type="domain" description="UBC core" evidence="2">
    <location>
        <begin position="3"/>
        <end position="149"/>
    </location>
</feature>
<feature type="active site" description="Glycyl thioester intermediate" evidence="2">
    <location>
        <position position="87"/>
    </location>
</feature>
<feature type="modified residue" description="N6-acetyllysine" evidence="32">
    <location>
        <position position="82"/>
    </location>
</feature>
<feature type="disulfide bond" description="Interchain (with C-78 in ISG15)" evidence="27">
    <location>
        <position position="87"/>
    </location>
</feature>
<feature type="cross-link" description="Glycyl lysine isopeptide (Lys-Gly) (interchain with G-Cter in ISG15)" evidence="7 8">
    <location>
        <position position="92"/>
    </location>
</feature>
<feature type="mutagenesis site" description="Loss of polyubiquitination of PCNA. Impairs interaction with SHPRH." evidence="12 13">
    <original>C</original>
    <variation>A</variation>
    <location>
        <position position="87"/>
    </location>
</feature>
<feature type="mutagenesis site" description="No ISGylation." evidence="7 8">
    <original>K</original>
    <variation>R</variation>
    <location>
        <position position="92"/>
    </location>
</feature>
<feature type="mutagenesis site" description="No effect on ISGylation." evidence="7">
    <original>K</original>
    <variation>R</variation>
    <location>
        <position position="94"/>
    </location>
</feature>
<feature type="helix" evidence="33">
    <location>
        <begin position="6"/>
        <end position="17"/>
    </location>
</feature>
<feature type="strand" evidence="33">
    <location>
        <begin position="23"/>
        <end position="27"/>
    </location>
</feature>
<feature type="strand" evidence="37">
    <location>
        <begin position="29"/>
        <end position="31"/>
    </location>
</feature>
<feature type="strand" evidence="33">
    <location>
        <begin position="34"/>
        <end position="40"/>
    </location>
</feature>
<feature type="strand" evidence="39">
    <location>
        <begin position="43"/>
        <end position="45"/>
    </location>
</feature>
<feature type="turn" evidence="33">
    <location>
        <begin position="46"/>
        <end position="49"/>
    </location>
</feature>
<feature type="strand" evidence="33">
    <location>
        <begin position="51"/>
        <end position="57"/>
    </location>
</feature>
<feature type="turn" evidence="33">
    <location>
        <begin position="60"/>
        <end position="64"/>
    </location>
</feature>
<feature type="strand" evidence="33">
    <location>
        <begin position="68"/>
        <end position="71"/>
    </location>
</feature>
<feature type="strand" evidence="35">
    <location>
        <begin position="78"/>
        <end position="80"/>
    </location>
</feature>
<feature type="strand" evidence="38">
    <location>
        <begin position="84"/>
        <end position="86"/>
    </location>
</feature>
<feature type="helix" evidence="33">
    <location>
        <begin position="89"/>
        <end position="91"/>
    </location>
</feature>
<feature type="turn" evidence="34">
    <location>
        <begin position="92"/>
        <end position="94"/>
    </location>
</feature>
<feature type="helix" evidence="33">
    <location>
        <begin position="101"/>
        <end position="113"/>
    </location>
</feature>
<feature type="strand" evidence="33">
    <location>
        <begin position="121"/>
        <end position="123"/>
    </location>
</feature>
<feature type="helix" evidence="33">
    <location>
        <begin position="124"/>
        <end position="131"/>
    </location>
</feature>
<feature type="helix" evidence="33">
    <location>
        <begin position="133"/>
        <end position="147"/>
    </location>
</feature>
<feature type="strand" evidence="36">
    <location>
        <begin position="148"/>
        <end position="150"/>
    </location>
</feature>
<reference key="1">
    <citation type="journal article" date="1996" name="J. Biochem.">
        <title>Cloning and expression of cDNA encoding a human ubiquitin-conjugating enzyme similar to the Drosophila bendless gene product.</title>
        <authorList>
            <person name="Yamaguchi T."/>
            <person name="Kim N.-S."/>
            <person name="Sekine S."/>
            <person name="Seino H."/>
            <person name="Osaka F."/>
            <person name="Yamao F."/>
            <person name="Kato S."/>
        </authorList>
    </citation>
    <scope>NUCLEOTIDE SEQUENCE [MRNA]</scope>
</reference>
<reference key="2">
    <citation type="submission" date="2003-05" db="EMBL/GenBank/DDBJ databases">
        <title>Cloning of human full-length CDSs in BD Creator(TM) system donor vector.</title>
        <authorList>
            <person name="Kalnine N."/>
            <person name="Chen X."/>
            <person name="Rolfs A."/>
            <person name="Halleck A."/>
            <person name="Hines L."/>
            <person name="Eisenstein S."/>
            <person name="Koundinya M."/>
            <person name="Raphael J."/>
            <person name="Moreira D."/>
            <person name="Kelley T."/>
            <person name="LaBaer J."/>
            <person name="Lin Y."/>
            <person name="Phelan M."/>
            <person name="Farmer A."/>
        </authorList>
    </citation>
    <scope>NUCLEOTIDE SEQUENCE [LARGE SCALE MRNA]</scope>
</reference>
<reference key="3">
    <citation type="journal article" date="2004" name="Genome Res.">
        <title>The status, quality, and expansion of the NIH full-length cDNA project: the Mammalian Gene Collection (MGC).</title>
        <authorList>
            <consortium name="The MGC Project Team"/>
        </authorList>
    </citation>
    <scope>NUCLEOTIDE SEQUENCE [LARGE SCALE MRNA]</scope>
    <source>
        <tissue>Lung</tissue>
        <tissue>Placenta</tissue>
        <tissue>Uterus</tissue>
    </source>
</reference>
<reference key="4">
    <citation type="submission" date="2008-12" db="UniProtKB">
        <authorList>
            <person name="Lubec G."/>
            <person name="Vishwanath V."/>
            <person name="Chen W.-Q."/>
            <person name="Sun Y."/>
        </authorList>
    </citation>
    <scope>PROTEIN SEQUENCE OF 15-24; 34-68; 86-92 AND 95-102</scope>
    <scope>IDENTIFICATION BY MASS SPECTROMETRY</scope>
    <source>
        <tissue>Brain</tissue>
        <tissue>Cajal-Retzius cell</tissue>
        <tissue>Fetal brain cortex</tissue>
    </source>
</reference>
<reference key="5">
    <citation type="journal article" date="2005" name="Biochem. Biophys. Res. Commun.">
        <title>ISG15 modification of ubiquitin E2 Ubc13 disrupts its ability to form thioester bond with ubiquitin.</title>
        <authorList>
            <person name="Zou W."/>
            <person name="Papov V."/>
            <person name="Malakhova O."/>
            <person name="Kim K.I."/>
            <person name="Dao C."/>
            <person name="Li J."/>
            <person name="Zhang D.-E."/>
        </authorList>
    </citation>
    <scope>PROTEIN SEQUENCE OF 86-94</scope>
    <scope>MUTAGENESIS OF LYS-92</scope>
    <scope>ISGYLATION AT LYS-92</scope>
    <scope>IDENTIFICATION BY MASS SPECTROMETRY</scope>
</reference>
<reference key="6">
    <citation type="journal article" date="1999" name="Cell">
        <title>Noncanonical MMS2-encoded ubiquitin-conjugating enzyme functions in assembly of novel polyubiquitin chains for DNA repair.</title>
        <authorList>
            <person name="Hofmann R.M."/>
            <person name="Pickart C.M."/>
        </authorList>
    </citation>
    <scope>FUNCTION</scope>
    <scope>INTERACTION WITH UBE2V2</scope>
</reference>
<reference key="7">
    <citation type="journal article" date="2003" name="Oncogene">
        <title>The Chfr mitotic checkpoint protein functions with Ubc13-Mms2 to form Lys63-linked polyubiquitin chains.</title>
        <authorList>
            <person name="Bothos J."/>
            <person name="Summers M.K."/>
            <person name="Venere M."/>
            <person name="Scolnick D.M."/>
            <person name="Halazonetis T.D."/>
        </authorList>
    </citation>
    <scope>FUNCTION</scope>
    <scope>INTERACTION WITH UBE2V2</scope>
</reference>
<reference key="8">
    <citation type="journal article" date="2005" name="Biochem. Biophys. Res. Commun.">
        <title>ISG15 modification of Ubc13 suppresses its ubiquitin-conjugating activity.</title>
        <authorList>
            <person name="Takeuchi T."/>
            <person name="Yokosawa H."/>
        </authorList>
    </citation>
    <scope>MUTAGENESIS OF LYS-92 AND LYS-94</scope>
    <scope>ISGYLATION AT LYS-92</scope>
</reference>
<reference key="9">
    <citation type="journal article" date="2006" name="J. Cell Biol.">
        <title>Human SHPRH suppresses genomic instability through proliferating cell nuclear antigen polyubiquitination.</title>
        <authorList>
            <person name="Motegi A."/>
            <person name="Sood R."/>
            <person name="Moinova H."/>
            <person name="Markowitz S.D."/>
            <person name="Liu P.P."/>
            <person name="Myung K."/>
        </authorList>
    </citation>
    <scope>INTERACTION WITH SHPRH</scope>
    <scope>MUTAGENESIS OF CYS-87</scope>
</reference>
<reference key="10">
    <citation type="journal article" date="2006" name="J. Cell. Biochem.">
        <title>The RING finger protein RNF8 recruits UBC13 for lysine 63-based self polyubiquitylation.</title>
        <authorList>
            <person name="Plans V."/>
            <person name="Scheper J."/>
            <person name="Soler M."/>
            <person name="Loukili N."/>
            <person name="Okano Y."/>
            <person name="Thomson T.M."/>
        </authorList>
    </citation>
    <scope>INTERACTION WITH RNF8</scope>
</reference>
<reference key="11">
    <citation type="journal article" date="2006" name="Proc. Natl. Acad. Sci. U.S.A.">
        <title>Human SHPRH is a ubiquitin ligase for Mms2-Ubc13-dependent polyubiquitylation of proliferating cell nuclear antigen.</title>
        <authorList>
            <person name="Unk I."/>
            <person name="Hajdu I."/>
            <person name="Fatyol K."/>
            <person name="Szakal B."/>
            <person name="Blastyak A."/>
            <person name="Bermudez V."/>
            <person name="Hurwitz J."/>
            <person name="Prakash L."/>
            <person name="Prakash S."/>
            <person name="Haracska L."/>
        </authorList>
    </citation>
    <scope>INTERACTION WITH SHPRH</scope>
</reference>
<reference key="12">
    <citation type="journal article" date="2007" name="J. Biol. Chem.">
        <title>Site-specific Lys-63-linked tumor necrosis factor receptor-associated factor 6 auto-ubiquitination is a critical determinant of I kappa B kinase activation.</title>
        <authorList>
            <person name="Lamothe B."/>
            <person name="Besse A."/>
            <person name="Campos A.D."/>
            <person name="Webster W.K."/>
            <person name="Wu H."/>
            <person name="Darnay B.G."/>
        </authorList>
    </citation>
    <scope>MUTAGENESIS OF CYS-87</scope>
</reference>
<reference key="13">
    <citation type="journal article" date="2008" name="Proc. Natl. Acad. Sci. U.S.A.">
        <title>Human HLTF functions as a ubiquitin ligase for proliferating cell nuclear antigen polyubiquitination.</title>
        <authorList>
            <person name="Unk I."/>
            <person name="Hajdu I."/>
            <person name="Fatyol K."/>
            <person name="Hurwitz J."/>
            <person name="Yoon J.-H."/>
            <person name="Prakash L."/>
            <person name="Prakash S."/>
            <person name="Haracska L."/>
        </authorList>
    </citation>
    <scope>INTERACTION WITH HLTF</scope>
</reference>
<reference key="14">
    <citation type="journal article" date="2008" name="Proc. Natl. Acad. Sci. U.S.A.">
        <title>Polyubiquitination of proliferating cell nuclear antigen by HLTF and SHPRH prevents genomic instability from stalled replication forks.</title>
        <authorList>
            <person name="Motegi A."/>
            <person name="Liaw H.-J."/>
            <person name="Lee K.-Y."/>
            <person name="Roest H.P."/>
            <person name="Maas A."/>
            <person name="Wu X."/>
            <person name="Moinova H."/>
            <person name="Markowitz S.D."/>
            <person name="Ding H."/>
            <person name="Hoeijmakers J.H.J."/>
            <person name="Myung K."/>
        </authorList>
    </citation>
    <scope>INTERACTION WITH HLTF</scope>
</reference>
<reference key="15">
    <citation type="journal article" date="2009" name="Cell">
        <title>The RIDDLE syndrome protein mediates a ubiquitin-dependent signaling cascade at sites of DNA damage.</title>
        <authorList>
            <person name="Stewart G.S."/>
            <person name="Panier S."/>
            <person name="Townsend K."/>
            <person name="Al-Hakim A.K."/>
            <person name="Kolas N.K."/>
            <person name="Miller E.S."/>
            <person name="Nakada S."/>
            <person name="Ylanko J."/>
            <person name="Olivarius S."/>
            <person name="Mendez M."/>
            <person name="Oldreive C."/>
            <person name="Wildenhain J."/>
            <person name="Tagliaferro A."/>
            <person name="Pelletier L."/>
            <person name="Taubenheim N."/>
            <person name="Durandy A."/>
            <person name="Byrd P.J."/>
            <person name="Stankovic T."/>
            <person name="Taylor A.M.R."/>
            <person name="Durocher D."/>
        </authorList>
    </citation>
    <scope>INTERACTION WITH RNF168</scope>
</reference>
<reference key="16">
    <citation type="journal article" date="2009" name="J. Biol. Chem.">
        <title>Regulation of endoplasmic reticulum-associated degradation by RNF5-dependent ubiquitination of JNK-associated membrane protein (JAMP).</title>
        <authorList>
            <person name="Tcherpakov M."/>
            <person name="Delaunay A."/>
            <person name="Toth J."/>
            <person name="Kadoya T."/>
            <person name="Petroski M.D."/>
            <person name="Ronai Z.A."/>
        </authorList>
    </citation>
    <scope>FUNCTION IN UBIQUITINATION OF JKAMP</scope>
</reference>
<reference key="17">
    <citation type="journal article" date="2009" name="Leukemia">
        <title>The ubiquitin ligase Triad1 inhibits myelopoiesis through UbcH7 and Ubc13 interacting domains.</title>
        <authorList>
            <person name="Marteijn J.A."/>
            <person name="van der Meer L.T."/>
            <person name="Smit J.J."/>
            <person name="Noordermeer S.M."/>
            <person name="Wissink W."/>
            <person name="Jansen P."/>
            <person name="Swarts H.G."/>
            <person name="Hibbert R.G."/>
            <person name="de Witte T."/>
            <person name="Sixma T.K."/>
            <person name="Jansen J.H."/>
            <person name="van der Reijden B.A."/>
        </authorList>
    </citation>
    <scope>INTERACTION WITH ARIH2</scope>
    <scope>SUBCELLULAR LOCATION</scope>
</reference>
<reference key="18">
    <citation type="journal article" date="2009" name="Proteins">
        <title>Analysis of electrostatic contributions to the selectivity of interactions between RING-finger domains and ubiquitin-conjugating enzymes.</title>
        <authorList>
            <person name="Scheper J."/>
            <person name="Oliva B."/>
            <person name="Villa-Freixa J."/>
            <person name="Thomson T.M."/>
        </authorList>
    </citation>
    <scope>INTERACTION WITH RNF11</scope>
</reference>
<reference key="19">
    <citation type="journal article" date="2009" name="Science">
        <title>Lysine acetylation targets protein complexes and co-regulates major cellular functions.</title>
        <authorList>
            <person name="Choudhary C."/>
            <person name="Kumar C."/>
            <person name="Gnad F."/>
            <person name="Nielsen M.L."/>
            <person name="Rehman M."/>
            <person name="Walther T.C."/>
            <person name="Olsen J.V."/>
            <person name="Mann M."/>
        </authorList>
    </citation>
    <scope>ACETYLATION [LARGE SCALE ANALYSIS] AT LYS-82</scope>
    <scope>IDENTIFICATION BY MASS SPECTROMETRY [LARGE SCALE ANALYSIS]</scope>
</reference>
<reference key="20">
    <citation type="journal article" date="2009" name="Sci. Signal.">
        <title>Act1, a U-box E3 ubiquitin ligase for IL-17 signaling.</title>
        <authorList>
            <person name="Liu C."/>
            <person name="Qian W."/>
            <person name="Qian Y."/>
            <person name="Giltiay N.V."/>
            <person name="Lu Y."/>
            <person name="Swaidani S."/>
            <person name="Misra S."/>
            <person name="Deng L."/>
            <person name="Chen Z.J."/>
            <person name="Li X."/>
        </authorList>
    </citation>
    <scope>FUNCTION</scope>
</reference>
<reference key="21">
    <citation type="journal article" date="2010" name="J. Biol. Chem.">
        <title>The E2 ubiquitin-conjugating enzymes direct polyubiquitination to preferred lysines.</title>
        <authorList>
            <person name="David Y."/>
            <person name="Ziv T."/>
            <person name="Admon A."/>
            <person name="Navon A."/>
        </authorList>
    </citation>
    <scope>FUNCTION</scope>
    <scope>CATALYTIC ACTIVITY</scope>
</reference>
<reference key="22">
    <citation type="journal article" date="2010" name="Nature">
        <title>Non-canonical inhibition of DNA damage-dependent ubiquitination by OTUB1.</title>
        <authorList>
            <person name="Nakada S."/>
            <person name="Tai I."/>
            <person name="Panier S."/>
            <person name="Al-Hakim A."/>
            <person name="Iemura S."/>
            <person name="Juang Y.C."/>
            <person name="O'Donnell L."/>
            <person name="Kumakubo A."/>
            <person name="Munro M."/>
            <person name="Sicheri F."/>
            <person name="Gingras A.C."/>
            <person name="Natsume T."/>
            <person name="Suda T."/>
            <person name="Durocher D."/>
        </authorList>
    </citation>
    <scope>ACTIVITY REGULATION</scope>
    <scope>INTERACTION WITH OTUB1</scope>
</reference>
<reference key="23">
    <citation type="journal article" date="2011" name="BMC Syst. Biol.">
        <title>Initial characterization of the human central proteome.</title>
        <authorList>
            <person name="Burkard T.R."/>
            <person name="Planyavsky M."/>
            <person name="Kaupe I."/>
            <person name="Breitwieser F.P."/>
            <person name="Buerckstuemmer T."/>
            <person name="Bennett K.L."/>
            <person name="Superti-Furga G."/>
            <person name="Colinge J."/>
        </authorList>
    </citation>
    <scope>IDENTIFICATION BY MASS SPECTROMETRY [LARGE SCALE ANALYSIS]</scope>
</reference>
<reference key="24">
    <citation type="journal article" date="2011" name="Nature">
        <title>TRIM5 is an innate immune sensor for the retrovirus capsid lattice.</title>
        <authorList>
            <person name="Pertel T."/>
            <person name="Hausmann S."/>
            <person name="Morger D."/>
            <person name="Zueger S."/>
            <person name="Guerra J."/>
            <person name="Lascano J."/>
            <person name="Reinhard C."/>
            <person name="Santoni F.A."/>
            <person name="Uchil P.D."/>
            <person name="Chatel L."/>
            <person name="Bisiaux A."/>
            <person name="Albert M.L."/>
            <person name="Strambio-De-Castillia C."/>
            <person name="Mothes W."/>
            <person name="Pizzato M."/>
            <person name="Gruetter M.G."/>
            <person name="Luban J."/>
        </authorList>
    </citation>
    <scope>FUNCTION</scope>
</reference>
<reference key="25">
    <citation type="journal article" date="2011" name="Science">
        <title>A DNA damage response screen identifies RHINO, a 9-1-1 and TopBP1 interacting protein required for ATR signaling.</title>
        <authorList>
            <person name="Cotta-Ramusino C."/>
            <person name="McDonald E.R. III"/>
            <person name="Hurov K."/>
            <person name="Sowa M.E."/>
            <person name="Harper J.W."/>
            <person name="Elledge S.J."/>
        </authorList>
    </citation>
    <scope>IDENTIFICATION BY MASS SPECTROMETRY</scope>
</reference>
<reference key="26">
    <citation type="journal article" date="2012" name="PLoS ONE">
        <title>Covalent protein modification with ISG15 via a conserved cysteine in the hinge region.</title>
        <authorList>
            <person name="Bade V.N."/>
            <person name="Nickels J."/>
            <person name="Keusekotten K."/>
            <person name="Praefcke G.J."/>
        </authorList>
    </citation>
    <scope>ISGYLATION</scope>
    <scope>DISULFIDE BOND</scope>
</reference>
<reference key="27">
    <citation type="journal article" date="2015" name="Proteomics">
        <title>N-terminome analysis of the human mitochondrial proteome.</title>
        <authorList>
            <person name="Vaca Jacome A.S."/>
            <person name="Rabilloud T."/>
            <person name="Schaeffer-Reiss C."/>
            <person name="Rompais M."/>
            <person name="Ayoub D."/>
            <person name="Lane L."/>
            <person name="Bairoch A."/>
            <person name="Van Dorsselaer A."/>
            <person name="Carapito C."/>
        </authorList>
    </citation>
    <scope>IDENTIFICATION BY MASS SPECTROMETRY [LARGE SCALE ANALYSIS]</scope>
</reference>
<reference key="28">
    <citation type="journal article" date="2017" name="Nat. Commun.">
        <title>Ube2D3 and Ube2N are essential for RIG-I-mediated MAVS aggregation in antiviral innate immunity.</title>
        <authorList>
            <person name="Shi Y."/>
            <person name="Yuan B."/>
            <person name="Zhu W."/>
            <person name="Zhang R."/>
            <person name="Li L."/>
            <person name="Hao X."/>
            <person name="Chen S."/>
            <person name="Hou F."/>
        </authorList>
    </citation>
    <scope>FUNCTION</scope>
    <scope>INTERACTION WITH RIGI AND RNF135</scope>
</reference>
<reference key="29">
    <citation type="journal article" date="2019" name="Cell">
        <title>Ubiquitin-Dependent and -Independent Roles of E3 Ligase RIPLET in Innate Immunity.</title>
        <authorList>
            <person name="Cadena C."/>
            <person name="Ahmad S."/>
            <person name="Xavier A."/>
            <person name="Willemsen J."/>
            <person name="Park S."/>
            <person name="Park J.W."/>
            <person name="Oh S.W."/>
            <person name="Fujita T."/>
            <person name="Hou F."/>
            <person name="Binder M."/>
            <person name="Hur S."/>
        </authorList>
    </citation>
    <scope>FUNCTION</scope>
</reference>
<reference key="30">
    <citation type="journal article" date="2001" name="Nat. Struct. Biol.">
        <title>Crystal structure of the human ubiquitin conjugating enzyme complex, hMms2-hUbc13.</title>
        <authorList>
            <person name="Moraes T.F."/>
            <person name="Edwards R.A."/>
            <person name="McKenna S."/>
            <person name="Pastushok L."/>
            <person name="Xiao W."/>
            <person name="Glover J.N.M."/>
            <person name="Ellison M.J."/>
        </authorList>
    </citation>
    <scope>X-RAY CRYSTALLOGRAPHY (1.85 ANGSTROMS) IN COMPLEX WITH UBE2V2</scope>
</reference>
<reference key="31">
    <citation type="journal article" date="2005" name="Mol. Cell">
        <title>Chaperoned ubiquitylation -- crystal structures of the CHIP U box E3 ubiquitin ligase and a CHIP-Ubc13-Uev1a complex.</title>
        <authorList>
            <person name="Zhang M."/>
            <person name="Windheim M."/>
            <person name="Roe S.M."/>
            <person name="Peggie M."/>
            <person name="Cohen P."/>
            <person name="Prodromou C."/>
            <person name="Pearl L.H."/>
        </authorList>
    </citation>
    <scope>X-RAY CRYSTALLOGRAPHY (2.90 ANGSTROMS) OF 2-152 IN COMPLEX WITH STUB1 AND UBE2V1</scope>
</reference>
<reference key="32">
    <citation type="journal article" date="2012" name="J. Biol. Chem.">
        <title>Molecular insights into the function of RING Finger (RNF)-containing proteins hRNF8 and hRNF168 in Ubc13/Mms2-dependent ubiquitylation.</title>
        <authorList>
            <person name="Campbell S.J."/>
            <person name="Edwards R.A."/>
            <person name="Leung C.C."/>
            <person name="Neculai D."/>
            <person name="Hodge C.D."/>
            <person name="Dhe-Paganon S."/>
            <person name="Glover J.N."/>
        </authorList>
    </citation>
    <scope>X-RAY CRYSTALLOGRAPHY (4.8 ANGSTROMS) OF 1-150 IN COMPLEX WITH RNF8 AND UBE2V2</scope>
</reference>
<reference key="33">
    <citation type="journal article" date="2012" name="Mol. Cell">
        <title>OTUB1 co-opts Lys48-linked ubiquitin recognition to suppress E2 enzyme function.</title>
        <authorList>
            <person name="Juang Y.C."/>
            <person name="Landry M.C."/>
            <person name="Sanches M."/>
            <person name="Vittal V."/>
            <person name="Leung C.C."/>
            <person name="Ceccarelli D.F."/>
            <person name="Mateo A.R."/>
            <person name="Pruneda J.N."/>
            <person name="Mao D.Y."/>
            <person name="Szilard R.K."/>
            <person name="Orlicky S."/>
            <person name="Munro M."/>
            <person name="Brzovic P.S."/>
            <person name="Klevit R.E."/>
            <person name="Sicheri F."/>
            <person name="Durocher D."/>
        </authorList>
    </citation>
    <scope>X-RAY CRYSTALLOGRAPHY (3.3 ANGSTROMS) OF 25-271 IN COMPLEX WITH UBE2V2 AND OTUB1</scope>
    <scope>ACTIVITY REGULATION</scope>
    <scope>INTERACTION WITH OTUB1</scope>
</reference>
<reference key="34">
    <citation type="journal article" date="2012" name="Nature">
        <title>The mechanism of OTUB1-mediated inhibition of ubiquitination.</title>
        <authorList>
            <person name="Wiener R."/>
            <person name="Zhang X."/>
            <person name="Wang T."/>
            <person name="Wolberger C."/>
        </authorList>
    </citation>
    <scope>X-RAY CRYSTALLOGRAPHY (3.11 ANGSTROMS) IN COMPLEX WITH OUTB1 AND UBIQUITIN</scope>
    <scope>ACTIVITY REGULATION</scope>
    <scope>INTERACTION WITH OTUB1</scope>
</reference>
<reference evidence="31" key="35">
    <citation type="journal article" date="2018" name="Biochem. J.">
        <title>Structural insights into the nanomolar affinity of RING E3 ligase ZNRF1 for Ube2N and its functional implications.</title>
        <authorList>
            <person name="Behera A.P."/>
            <person name="Naskar P."/>
            <person name="Agarwal S."/>
            <person name="Banka P.A."/>
            <person name="Poddar A."/>
            <person name="Datta A.B."/>
        </authorList>
    </citation>
    <scope>X-RAY CRYSTALLOGRAPHY (1.47 ANGSTROMS)</scope>
    <scope>INTERACTION WITH ZNRF1</scope>
</reference>
<gene>
    <name type="primary">UBE2N</name>
    <name type="synonym">BLU</name>
</gene>
<evidence type="ECO:0000250" key="1">
    <source>
        <dbReference type="UniProtKB" id="P61089"/>
    </source>
</evidence>
<evidence type="ECO:0000255" key="2">
    <source>
        <dbReference type="PROSITE-ProRule" id="PRU00388"/>
    </source>
</evidence>
<evidence type="ECO:0000255" key="3">
    <source>
        <dbReference type="PROSITE-ProRule" id="PRU10133"/>
    </source>
</evidence>
<evidence type="ECO:0000269" key="4">
    <source>
    </source>
</evidence>
<evidence type="ECO:0000269" key="5">
    <source>
    </source>
</evidence>
<evidence type="ECO:0000269" key="6">
    <source>
    </source>
</evidence>
<evidence type="ECO:0000269" key="7">
    <source>
    </source>
</evidence>
<evidence type="ECO:0000269" key="8">
    <source>
    </source>
</evidence>
<evidence type="ECO:0000269" key="9">
    <source>
    </source>
</evidence>
<evidence type="ECO:0000269" key="10">
    <source>
    </source>
</evidence>
<evidence type="ECO:0000269" key="11">
    <source>
    </source>
</evidence>
<evidence type="ECO:0000269" key="12">
    <source>
    </source>
</evidence>
<evidence type="ECO:0000269" key="13">
    <source>
    </source>
</evidence>
<evidence type="ECO:0000269" key="14">
    <source>
    </source>
</evidence>
<evidence type="ECO:0000269" key="15">
    <source>
    </source>
</evidence>
<evidence type="ECO:0000269" key="16">
    <source>
    </source>
</evidence>
<evidence type="ECO:0000269" key="17">
    <source>
    </source>
</evidence>
<evidence type="ECO:0000269" key="18">
    <source>
    </source>
</evidence>
<evidence type="ECO:0000269" key="19">
    <source>
    </source>
</evidence>
<evidence type="ECO:0000269" key="20">
    <source>
    </source>
</evidence>
<evidence type="ECO:0000269" key="21">
    <source>
    </source>
</evidence>
<evidence type="ECO:0000269" key="22">
    <source>
    </source>
</evidence>
<evidence type="ECO:0000269" key="23">
    <source>
    </source>
</evidence>
<evidence type="ECO:0000269" key="24">
    <source>
    </source>
</evidence>
<evidence type="ECO:0000269" key="25">
    <source>
    </source>
</evidence>
<evidence type="ECO:0000269" key="26">
    <source>
    </source>
</evidence>
<evidence type="ECO:0000269" key="27">
    <source>
    </source>
</evidence>
<evidence type="ECO:0000269" key="28">
    <source>
    </source>
</evidence>
<evidence type="ECO:0000269" key="29">
    <source>
    </source>
</evidence>
<evidence type="ECO:0000269" key="30">
    <source>
    </source>
</evidence>
<evidence type="ECO:0007744" key="31">
    <source>
        <dbReference type="PDB" id="5YWR"/>
    </source>
</evidence>
<evidence type="ECO:0007744" key="32">
    <source>
    </source>
</evidence>
<evidence type="ECO:0007829" key="33">
    <source>
        <dbReference type="PDB" id="4ONL"/>
    </source>
</evidence>
<evidence type="ECO:0007829" key="34">
    <source>
        <dbReference type="PDB" id="4ONM"/>
    </source>
</evidence>
<evidence type="ECO:0007829" key="35">
    <source>
        <dbReference type="PDB" id="5AIT"/>
    </source>
</evidence>
<evidence type="ECO:0007829" key="36">
    <source>
        <dbReference type="PDB" id="5YWR"/>
    </source>
</evidence>
<evidence type="ECO:0007829" key="37">
    <source>
        <dbReference type="PDB" id="6KFP"/>
    </source>
</evidence>
<evidence type="ECO:0007829" key="38">
    <source>
        <dbReference type="PDB" id="6LP2"/>
    </source>
</evidence>
<evidence type="ECO:0007829" key="39">
    <source>
        <dbReference type="PDB" id="7BBF"/>
    </source>
</evidence>
<proteinExistence type="evidence at protein level"/>
<name>UBE2N_HUMAN</name>
<protein>
    <recommendedName>
        <fullName>Ubiquitin-conjugating enzyme E2 N</fullName>
        <ecNumber evidence="21">2.3.2.23</ecNumber>
    </recommendedName>
    <alternativeName>
        <fullName>Bendless-like ubiquitin-conjugating enzyme</fullName>
    </alternativeName>
    <alternativeName>
        <fullName>E2 ubiquitin-conjugating enzyme N</fullName>
    </alternativeName>
    <alternativeName>
        <fullName>Ubc13</fullName>
    </alternativeName>
    <alternativeName>
        <fullName>UbcH13</fullName>
    </alternativeName>
    <alternativeName>
        <fullName>Ubiquitin carrier protein N</fullName>
    </alternativeName>
    <alternativeName>
        <fullName>Ubiquitin-protein ligase N</fullName>
    </alternativeName>
</protein>
<organism>
    <name type="scientific">Homo sapiens</name>
    <name type="common">Human</name>
    <dbReference type="NCBI Taxonomy" id="9606"/>
    <lineage>
        <taxon>Eukaryota</taxon>
        <taxon>Metazoa</taxon>
        <taxon>Chordata</taxon>
        <taxon>Craniata</taxon>
        <taxon>Vertebrata</taxon>
        <taxon>Euteleostomi</taxon>
        <taxon>Mammalia</taxon>
        <taxon>Eutheria</taxon>
        <taxon>Euarchontoglires</taxon>
        <taxon>Primates</taxon>
        <taxon>Haplorrhini</taxon>
        <taxon>Catarrhini</taxon>
        <taxon>Hominidae</taxon>
        <taxon>Homo</taxon>
    </lineage>
</organism>
<accession>P61088</accession>
<accession>Q16781</accession>
<accession>Q53Y81</accession>